<organism>
    <name type="scientific">Nitrosomonas europaea (strain ATCC 19718 / CIP 103999 / KCTC 2705 / NBRC 14298)</name>
    <dbReference type="NCBI Taxonomy" id="228410"/>
    <lineage>
        <taxon>Bacteria</taxon>
        <taxon>Pseudomonadati</taxon>
        <taxon>Pseudomonadota</taxon>
        <taxon>Betaproteobacteria</taxon>
        <taxon>Nitrosomonadales</taxon>
        <taxon>Nitrosomonadaceae</taxon>
        <taxon>Nitrosomonas</taxon>
    </lineage>
</organism>
<proteinExistence type="inferred from homology"/>
<reference key="1">
    <citation type="journal article" date="2003" name="J. Bacteriol.">
        <title>Complete genome sequence of the ammonia-oxidizing bacterium and obligate chemolithoautotroph Nitrosomonas europaea.</title>
        <authorList>
            <person name="Chain P."/>
            <person name="Lamerdin J.E."/>
            <person name="Larimer F.W."/>
            <person name="Regala W."/>
            <person name="Lao V."/>
            <person name="Land M.L."/>
            <person name="Hauser L."/>
            <person name="Hooper A.B."/>
            <person name="Klotz M.G."/>
            <person name="Norton J."/>
            <person name="Sayavedra-Soto L.A."/>
            <person name="Arciero D.M."/>
            <person name="Hommes N.G."/>
            <person name="Whittaker M.M."/>
            <person name="Arp D.J."/>
        </authorList>
    </citation>
    <scope>NUCLEOTIDE SEQUENCE [LARGE SCALE GENOMIC DNA]</scope>
    <source>
        <strain>ATCC 19718 / CIP 103999 / KCTC 2705 / NBRC 14298</strain>
    </source>
</reference>
<comment type="function">
    <text evidence="1">Catalyzes the sequential NAD-dependent oxidations of L-histidinol to L-histidinaldehyde and then to L-histidine.</text>
</comment>
<comment type="catalytic activity">
    <reaction evidence="1">
        <text>L-histidinol + 2 NAD(+) + H2O = L-histidine + 2 NADH + 3 H(+)</text>
        <dbReference type="Rhea" id="RHEA:20641"/>
        <dbReference type="ChEBI" id="CHEBI:15377"/>
        <dbReference type="ChEBI" id="CHEBI:15378"/>
        <dbReference type="ChEBI" id="CHEBI:57540"/>
        <dbReference type="ChEBI" id="CHEBI:57595"/>
        <dbReference type="ChEBI" id="CHEBI:57699"/>
        <dbReference type="ChEBI" id="CHEBI:57945"/>
        <dbReference type="EC" id="1.1.1.23"/>
    </reaction>
</comment>
<comment type="cofactor">
    <cofactor evidence="1">
        <name>Zn(2+)</name>
        <dbReference type="ChEBI" id="CHEBI:29105"/>
    </cofactor>
    <text evidence="1">Binds 1 zinc ion per subunit.</text>
</comment>
<comment type="pathway">
    <text evidence="1">Amino-acid biosynthesis; L-histidine biosynthesis; L-histidine from 5-phospho-alpha-D-ribose 1-diphosphate: step 9/9.</text>
</comment>
<comment type="similarity">
    <text evidence="1">Belongs to the histidinol dehydrogenase family.</text>
</comment>
<evidence type="ECO:0000255" key="1">
    <source>
        <dbReference type="HAMAP-Rule" id="MF_01024"/>
    </source>
</evidence>
<keyword id="KW-0028">Amino-acid biosynthesis</keyword>
<keyword id="KW-0368">Histidine biosynthesis</keyword>
<keyword id="KW-0479">Metal-binding</keyword>
<keyword id="KW-0520">NAD</keyword>
<keyword id="KW-0560">Oxidoreductase</keyword>
<keyword id="KW-1185">Reference proteome</keyword>
<keyword id="KW-0862">Zinc</keyword>
<feature type="chain" id="PRO_0000135805" description="Histidinol dehydrogenase">
    <location>
        <begin position="1"/>
        <end position="432"/>
    </location>
</feature>
<feature type="active site" description="Proton acceptor" evidence="1">
    <location>
        <position position="330"/>
    </location>
</feature>
<feature type="active site" description="Proton acceptor" evidence="1">
    <location>
        <position position="331"/>
    </location>
</feature>
<feature type="binding site" evidence="1">
    <location>
        <position position="133"/>
    </location>
    <ligand>
        <name>NAD(+)</name>
        <dbReference type="ChEBI" id="CHEBI:57540"/>
    </ligand>
</feature>
<feature type="binding site" evidence="1">
    <location>
        <position position="194"/>
    </location>
    <ligand>
        <name>NAD(+)</name>
        <dbReference type="ChEBI" id="CHEBI:57540"/>
    </ligand>
</feature>
<feature type="binding site" evidence="1">
    <location>
        <position position="217"/>
    </location>
    <ligand>
        <name>NAD(+)</name>
        <dbReference type="ChEBI" id="CHEBI:57540"/>
    </ligand>
</feature>
<feature type="binding site" evidence="1">
    <location>
        <position position="240"/>
    </location>
    <ligand>
        <name>substrate</name>
    </ligand>
</feature>
<feature type="binding site" evidence="1">
    <location>
        <position position="262"/>
    </location>
    <ligand>
        <name>substrate</name>
    </ligand>
</feature>
<feature type="binding site" evidence="1">
    <location>
        <position position="262"/>
    </location>
    <ligand>
        <name>Zn(2+)</name>
        <dbReference type="ChEBI" id="CHEBI:29105"/>
    </ligand>
</feature>
<feature type="binding site" evidence="1">
    <location>
        <position position="265"/>
    </location>
    <ligand>
        <name>substrate</name>
    </ligand>
</feature>
<feature type="binding site" evidence="1">
    <location>
        <position position="265"/>
    </location>
    <ligand>
        <name>Zn(2+)</name>
        <dbReference type="ChEBI" id="CHEBI:29105"/>
    </ligand>
</feature>
<feature type="binding site" evidence="1">
    <location>
        <position position="331"/>
    </location>
    <ligand>
        <name>substrate</name>
    </ligand>
</feature>
<feature type="binding site" evidence="1">
    <location>
        <position position="364"/>
    </location>
    <ligand>
        <name>substrate</name>
    </ligand>
</feature>
<feature type="binding site" evidence="1">
    <location>
        <position position="364"/>
    </location>
    <ligand>
        <name>Zn(2+)</name>
        <dbReference type="ChEBI" id="CHEBI:29105"/>
    </ligand>
</feature>
<feature type="binding site" evidence="1">
    <location>
        <position position="418"/>
    </location>
    <ligand>
        <name>substrate</name>
    </ligand>
</feature>
<feature type="binding site" evidence="1">
    <location>
        <position position="423"/>
    </location>
    <ligand>
        <name>substrate</name>
    </ligand>
</feature>
<feature type="binding site" evidence="1">
    <location>
        <position position="423"/>
    </location>
    <ligand>
        <name>Zn(2+)</name>
        <dbReference type="ChEBI" id="CHEBI:29105"/>
    </ligand>
</feature>
<sequence length="432" mass="47371">MIKIRRLSSVDDHFQAELDQLLSFEVSVDSEIERTVTQILHQIRTHGDRALLELTRQFDNPDIDRIEEIELPRDEWQSALMSLDKVQREALEQAASRIRAYHEKQLAQSWDYVELDGTRLGQKITALDRVGLYVPGGKAAYPSSVLMNAIPARVAGVRELIMVTPTPKGEKNPLVLAAAAICEVDRVFTIGGAQAVAALAYGTTTVPKVDKIVGPGNAYVAAAKRHVFGTVGIDMLAGPSEILVICDGKTNPDWIAMDLFSQAEHDEQAQSILLCPDKAFLDRVADSISRLIDTLPRRDVIRSSLENRGALIHVRDLEEACMIANRIAPEHLELSVDEPEQWVDSIRHAGAIFLGRYTCEALGDYCAGPNHVLPTSGTARFSSPLGVYDFQKRTSLIQVSAAGASRLGETASILAKGEGLDAHARSAESRYQ</sequence>
<dbReference type="EC" id="1.1.1.23" evidence="1"/>
<dbReference type="EMBL" id="AL954747">
    <property type="protein sequence ID" value="CAD84783.1"/>
    <property type="molecule type" value="Genomic_DNA"/>
</dbReference>
<dbReference type="RefSeq" id="WP_011111483.1">
    <property type="nucleotide sequence ID" value="NC_004757.1"/>
</dbReference>
<dbReference type="SMR" id="Q82W26"/>
<dbReference type="STRING" id="228410.NE0872"/>
<dbReference type="GeneID" id="87104063"/>
<dbReference type="KEGG" id="neu:NE0872"/>
<dbReference type="eggNOG" id="COG0141">
    <property type="taxonomic scope" value="Bacteria"/>
</dbReference>
<dbReference type="HOGENOM" id="CLU_006732_3_3_4"/>
<dbReference type="OrthoDB" id="9805269at2"/>
<dbReference type="PhylomeDB" id="Q82W26"/>
<dbReference type="UniPathway" id="UPA00031">
    <property type="reaction ID" value="UER00014"/>
</dbReference>
<dbReference type="Proteomes" id="UP000001416">
    <property type="component" value="Chromosome"/>
</dbReference>
<dbReference type="GO" id="GO:0005829">
    <property type="term" value="C:cytosol"/>
    <property type="evidence" value="ECO:0007669"/>
    <property type="project" value="TreeGrafter"/>
</dbReference>
<dbReference type="GO" id="GO:0004399">
    <property type="term" value="F:histidinol dehydrogenase activity"/>
    <property type="evidence" value="ECO:0007669"/>
    <property type="project" value="UniProtKB-UniRule"/>
</dbReference>
<dbReference type="GO" id="GO:0051287">
    <property type="term" value="F:NAD binding"/>
    <property type="evidence" value="ECO:0007669"/>
    <property type="project" value="InterPro"/>
</dbReference>
<dbReference type="GO" id="GO:0008270">
    <property type="term" value="F:zinc ion binding"/>
    <property type="evidence" value="ECO:0007669"/>
    <property type="project" value="UniProtKB-UniRule"/>
</dbReference>
<dbReference type="GO" id="GO:0000105">
    <property type="term" value="P:L-histidine biosynthetic process"/>
    <property type="evidence" value="ECO:0007669"/>
    <property type="project" value="UniProtKB-UniRule"/>
</dbReference>
<dbReference type="CDD" id="cd06572">
    <property type="entry name" value="Histidinol_dh"/>
    <property type="match status" value="1"/>
</dbReference>
<dbReference type="FunFam" id="3.40.50.1980:FF:000010">
    <property type="entry name" value="Histidinol dehydrogenase"/>
    <property type="match status" value="1"/>
</dbReference>
<dbReference type="FunFam" id="3.40.50.1980:FF:000026">
    <property type="entry name" value="Histidinol dehydrogenase"/>
    <property type="match status" value="1"/>
</dbReference>
<dbReference type="Gene3D" id="1.20.5.1300">
    <property type="match status" value="1"/>
</dbReference>
<dbReference type="Gene3D" id="3.40.50.1980">
    <property type="entry name" value="Nitrogenase molybdenum iron protein domain"/>
    <property type="match status" value="2"/>
</dbReference>
<dbReference type="HAMAP" id="MF_01024">
    <property type="entry name" value="HisD"/>
    <property type="match status" value="1"/>
</dbReference>
<dbReference type="InterPro" id="IPR016161">
    <property type="entry name" value="Ald_DH/histidinol_DH"/>
</dbReference>
<dbReference type="InterPro" id="IPR001692">
    <property type="entry name" value="Histidinol_DH_CS"/>
</dbReference>
<dbReference type="InterPro" id="IPR022695">
    <property type="entry name" value="Histidinol_DH_monofunct"/>
</dbReference>
<dbReference type="InterPro" id="IPR012131">
    <property type="entry name" value="Hstdl_DH"/>
</dbReference>
<dbReference type="NCBIfam" id="TIGR00069">
    <property type="entry name" value="hisD"/>
    <property type="match status" value="1"/>
</dbReference>
<dbReference type="PANTHER" id="PTHR21256:SF2">
    <property type="entry name" value="HISTIDINE BIOSYNTHESIS TRIFUNCTIONAL PROTEIN"/>
    <property type="match status" value="1"/>
</dbReference>
<dbReference type="PANTHER" id="PTHR21256">
    <property type="entry name" value="HISTIDINOL DEHYDROGENASE HDH"/>
    <property type="match status" value="1"/>
</dbReference>
<dbReference type="Pfam" id="PF00815">
    <property type="entry name" value="Histidinol_dh"/>
    <property type="match status" value="1"/>
</dbReference>
<dbReference type="PIRSF" id="PIRSF000099">
    <property type="entry name" value="Histidinol_dh"/>
    <property type="match status" value="1"/>
</dbReference>
<dbReference type="PRINTS" id="PR00083">
    <property type="entry name" value="HOLDHDRGNASE"/>
</dbReference>
<dbReference type="SUPFAM" id="SSF53720">
    <property type="entry name" value="ALDH-like"/>
    <property type="match status" value="1"/>
</dbReference>
<dbReference type="PROSITE" id="PS00611">
    <property type="entry name" value="HISOL_DEHYDROGENASE"/>
    <property type="match status" value="1"/>
</dbReference>
<accession>Q82W26</accession>
<protein>
    <recommendedName>
        <fullName evidence="1">Histidinol dehydrogenase</fullName>
        <shortName evidence="1">HDH</shortName>
        <ecNumber evidence="1">1.1.1.23</ecNumber>
    </recommendedName>
</protein>
<gene>
    <name evidence="1" type="primary">hisD</name>
    <name type="ordered locus">NE0872</name>
</gene>
<name>HISX_NITEU</name>